<dbReference type="EC" id="4.1.1.48" evidence="1"/>
<dbReference type="EMBL" id="CP000804">
    <property type="protein sequence ID" value="ABU58927.1"/>
    <property type="molecule type" value="Genomic_DNA"/>
</dbReference>
<dbReference type="RefSeq" id="WP_012121351.1">
    <property type="nucleotide sequence ID" value="NC_009767.1"/>
</dbReference>
<dbReference type="SMR" id="A7NMZ8"/>
<dbReference type="STRING" id="383372.Rcas_2858"/>
<dbReference type="KEGG" id="rca:Rcas_2858"/>
<dbReference type="eggNOG" id="COG0134">
    <property type="taxonomic scope" value="Bacteria"/>
</dbReference>
<dbReference type="HOGENOM" id="CLU_034247_2_0_0"/>
<dbReference type="OrthoDB" id="9804217at2"/>
<dbReference type="UniPathway" id="UPA00035">
    <property type="reaction ID" value="UER00043"/>
</dbReference>
<dbReference type="Proteomes" id="UP000000263">
    <property type="component" value="Chromosome"/>
</dbReference>
<dbReference type="GO" id="GO:0004425">
    <property type="term" value="F:indole-3-glycerol-phosphate synthase activity"/>
    <property type="evidence" value="ECO:0007669"/>
    <property type="project" value="UniProtKB-UniRule"/>
</dbReference>
<dbReference type="GO" id="GO:0004640">
    <property type="term" value="F:phosphoribosylanthranilate isomerase activity"/>
    <property type="evidence" value="ECO:0007669"/>
    <property type="project" value="TreeGrafter"/>
</dbReference>
<dbReference type="GO" id="GO:0000162">
    <property type="term" value="P:L-tryptophan biosynthetic process"/>
    <property type="evidence" value="ECO:0007669"/>
    <property type="project" value="UniProtKB-UniRule"/>
</dbReference>
<dbReference type="CDD" id="cd00331">
    <property type="entry name" value="IGPS"/>
    <property type="match status" value="1"/>
</dbReference>
<dbReference type="FunFam" id="3.20.20.70:FF:000024">
    <property type="entry name" value="Indole-3-glycerol phosphate synthase"/>
    <property type="match status" value="1"/>
</dbReference>
<dbReference type="Gene3D" id="3.20.20.70">
    <property type="entry name" value="Aldolase class I"/>
    <property type="match status" value="1"/>
</dbReference>
<dbReference type="HAMAP" id="MF_00134_B">
    <property type="entry name" value="IGPS_B"/>
    <property type="match status" value="1"/>
</dbReference>
<dbReference type="InterPro" id="IPR013785">
    <property type="entry name" value="Aldolase_TIM"/>
</dbReference>
<dbReference type="InterPro" id="IPR045186">
    <property type="entry name" value="Indole-3-glycerol_P_synth"/>
</dbReference>
<dbReference type="InterPro" id="IPR013798">
    <property type="entry name" value="Indole-3-glycerol_P_synth_dom"/>
</dbReference>
<dbReference type="InterPro" id="IPR001468">
    <property type="entry name" value="Indole-3-GlycerolPSynthase_CS"/>
</dbReference>
<dbReference type="InterPro" id="IPR011060">
    <property type="entry name" value="RibuloseP-bd_barrel"/>
</dbReference>
<dbReference type="NCBIfam" id="NF001377">
    <property type="entry name" value="PRK00278.2-4"/>
    <property type="match status" value="1"/>
</dbReference>
<dbReference type="PANTHER" id="PTHR22854:SF2">
    <property type="entry name" value="INDOLE-3-GLYCEROL-PHOSPHATE SYNTHASE"/>
    <property type="match status" value="1"/>
</dbReference>
<dbReference type="PANTHER" id="PTHR22854">
    <property type="entry name" value="TRYPTOPHAN BIOSYNTHESIS PROTEIN"/>
    <property type="match status" value="1"/>
</dbReference>
<dbReference type="Pfam" id="PF00218">
    <property type="entry name" value="IGPS"/>
    <property type="match status" value="1"/>
</dbReference>
<dbReference type="SUPFAM" id="SSF51366">
    <property type="entry name" value="Ribulose-phoshate binding barrel"/>
    <property type="match status" value="1"/>
</dbReference>
<dbReference type="PROSITE" id="PS00614">
    <property type="entry name" value="IGPS"/>
    <property type="match status" value="1"/>
</dbReference>
<feature type="chain" id="PRO_1000076425" description="Indole-3-glycerol phosphate synthase">
    <location>
        <begin position="1"/>
        <end position="269"/>
    </location>
</feature>
<keyword id="KW-0028">Amino-acid biosynthesis</keyword>
<keyword id="KW-0057">Aromatic amino acid biosynthesis</keyword>
<keyword id="KW-0210">Decarboxylase</keyword>
<keyword id="KW-0456">Lyase</keyword>
<keyword id="KW-1185">Reference proteome</keyword>
<keyword id="KW-0822">Tryptophan biosynthesis</keyword>
<reference key="1">
    <citation type="submission" date="2007-08" db="EMBL/GenBank/DDBJ databases">
        <title>Complete sequence of Roseiflexus castenholzii DSM 13941.</title>
        <authorList>
            <consortium name="US DOE Joint Genome Institute"/>
            <person name="Copeland A."/>
            <person name="Lucas S."/>
            <person name="Lapidus A."/>
            <person name="Barry K."/>
            <person name="Glavina del Rio T."/>
            <person name="Dalin E."/>
            <person name="Tice H."/>
            <person name="Pitluck S."/>
            <person name="Thompson L.S."/>
            <person name="Brettin T."/>
            <person name="Bruce D."/>
            <person name="Detter J.C."/>
            <person name="Han C."/>
            <person name="Tapia R."/>
            <person name="Schmutz J."/>
            <person name="Larimer F."/>
            <person name="Land M."/>
            <person name="Hauser L."/>
            <person name="Kyrpides N."/>
            <person name="Mikhailova N."/>
            <person name="Bryant D.A."/>
            <person name="Hanada S."/>
            <person name="Tsukatani Y."/>
            <person name="Richardson P."/>
        </authorList>
    </citation>
    <scope>NUCLEOTIDE SEQUENCE [LARGE SCALE GENOMIC DNA]</scope>
    <source>
        <strain>DSM 13941 / HLO8</strain>
    </source>
</reference>
<gene>
    <name evidence="1" type="primary">trpC</name>
    <name type="ordered locus">Rcas_2858</name>
</gene>
<evidence type="ECO:0000255" key="1">
    <source>
        <dbReference type="HAMAP-Rule" id="MF_00134"/>
    </source>
</evidence>
<comment type="catalytic activity">
    <reaction evidence="1">
        <text>1-(2-carboxyphenylamino)-1-deoxy-D-ribulose 5-phosphate + H(+) = (1S,2R)-1-C-(indol-3-yl)glycerol 3-phosphate + CO2 + H2O</text>
        <dbReference type="Rhea" id="RHEA:23476"/>
        <dbReference type="ChEBI" id="CHEBI:15377"/>
        <dbReference type="ChEBI" id="CHEBI:15378"/>
        <dbReference type="ChEBI" id="CHEBI:16526"/>
        <dbReference type="ChEBI" id="CHEBI:58613"/>
        <dbReference type="ChEBI" id="CHEBI:58866"/>
        <dbReference type="EC" id="4.1.1.48"/>
    </reaction>
</comment>
<comment type="pathway">
    <text evidence="1">Amino-acid biosynthesis; L-tryptophan biosynthesis; L-tryptophan from chorismate: step 4/5.</text>
</comment>
<comment type="similarity">
    <text evidence="1">Belongs to the TrpC family.</text>
</comment>
<name>TRPC_ROSCS</name>
<protein>
    <recommendedName>
        <fullName evidence="1">Indole-3-glycerol phosphate synthase</fullName>
        <shortName evidence="1">IGPS</shortName>
        <ecNumber evidence="1">4.1.1.48</ecNumber>
    </recommendedName>
</protein>
<proteinExistence type="inferred from homology"/>
<sequence length="269" mass="29211">MDTMLNRILAHKRIEVERQRIKTPYDQMRTRAETAPPPRDFGAALRAHHPIALIAEVKKASPSKGVLIENFDPLALARTYASNGAAAISVLTDVRFFQGHLKYIEGIRALFDRGAAPPLPLLRKDFMIDPYQIVEARAYGADAVLLIVAALDDETLAALLALAGDLGMQALVEVHNADELRRALAVGARIIGVNNRDLHSFTTTLETTRHLAALLPSENRPLLVSESGIFTADHVALVRSWGVDAVLVGEALVTAPDIAGKVRELGGRL</sequence>
<accession>A7NMZ8</accession>
<organism>
    <name type="scientific">Roseiflexus castenholzii (strain DSM 13941 / HLO8)</name>
    <dbReference type="NCBI Taxonomy" id="383372"/>
    <lineage>
        <taxon>Bacteria</taxon>
        <taxon>Bacillati</taxon>
        <taxon>Chloroflexota</taxon>
        <taxon>Chloroflexia</taxon>
        <taxon>Chloroflexales</taxon>
        <taxon>Roseiflexineae</taxon>
        <taxon>Roseiflexaceae</taxon>
        <taxon>Roseiflexus</taxon>
    </lineage>
</organism>